<proteinExistence type="inferred from homology"/>
<comment type="function">
    <text evidence="1">Forms part of the ribosomal stalk which helps the ribosome interact with GTP-bound translation factors.</text>
</comment>
<comment type="subunit">
    <text evidence="1">Part of the ribosomal stalk of the 50S ribosomal subunit. Interacts with L10 and the large rRNA to form the base of the stalk. L10 forms an elongated spine to which L12 dimers bind in a sequential fashion forming a multimeric L10(L12)X complex.</text>
</comment>
<comment type="PTM">
    <text evidence="1">One or more lysine residues are methylated.</text>
</comment>
<comment type="similarity">
    <text evidence="1">Belongs to the universal ribosomal protein uL11 family.</text>
</comment>
<feature type="chain" id="PRO_1000195746" description="Large ribosomal subunit protein uL11">
    <location>
        <begin position="1"/>
        <end position="149"/>
    </location>
</feature>
<evidence type="ECO:0000255" key="1">
    <source>
        <dbReference type="HAMAP-Rule" id="MF_00736"/>
    </source>
</evidence>
<evidence type="ECO:0000305" key="2"/>
<sequence length="149" mass="15874">MAKKITGYVKLQVPAGSANPAPPIGPALGQRGLNIMEFCKAFNAQTAQLEKGMPIPVVITAYQDRSFTFELKTPPVSYFLKKAAGLETKKKPGSGSKTPGKGTFVGKVTRAQLSEIAEKKMKDLNCETVEAAVQMIEGSARSMGLQVQG</sequence>
<protein>
    <recommendedName>
        <fullName evidence="1">Large ribosomal subunit protein uL11</fullName>
    </recommendedName>
    <alternativeName>
        <fullName evidence="2">50S ribosomal protein L11</fullName>
    </alternativeName>
</protein>
<gene>
    <name evidence="1" type="primary">rplK</name>
    <name type="ordered locus">Xaut_3360</name>
</gene>
<dbReference type="EMBL" id="CP000781">
    <property type="protein sequence ID" value="ABS68589.1"/>
    <property type="molecule type" value="Genomic_DNA"/>
</dbReference>
<dbReference type="SMR" id="A7IKP6"/>
<dbReference type="STRING" id="78245.Xaut_3360"/>
<dbReference type="KEGG" id="xau:Xaut_3360"/>
<dbReference type="eggNOG" id="COG0080">
    <property type="taxonomic scope" value="Bacteria"/>
</dbReference>
<dbReference type="HOGENOM" id="CLU_074237_2_0_5"/>
<dbReference type="OrthoDB" id="9802408at2"/>
<dbReference type="PhylomeDB" id="A7IKP6"/>
<dbReference type="Proteomes" id="UP000002417">
    <property type="component" value="Chromosome"/>
</dbReference>
<dbReference type="GO" id="GO:0022625">
    <property type="term" value="C:cytosolic large ribosomal subunit"/>
    <property type="evidence" value="ECO:0007669"/>
    <property type="project" value="TreeGrafter"/>
</dbReference>
<dbReference type="GO" id="GO:0070180">
    <property type="term" value="F:large ribosomal subunit rRNA binding"/>
    <property type="evidence" value="ECO:0007669"/>
    <property type="project" value="UniProtKB-UniRule"/>
</dbReference>
<dbReference type="GO" id="GO:0003735">
    <property type="term" value="F:structural constituent of ribosome"/>
    <property type="evidence" value="ECO:0007669"/>
    <property type="project" value="InterPro"/>
</dbReference>
<dbReference type="GO" id="GO:0006412">
    <property type="term" value="P:translation"/>
    <property type="evidence" value="ECO:0007669"/>
    <property type="project" value="UniProtKB-UniRule"/>
</dbReference>
<dbReference type="CDD" id="cd00349">
    <property type="entry name" value="Ribosomal_L11"/>
    <property type="match status" value="1"/>
</dbReference>
<dbReference type="FunFam" id="1.10.10.250:FF:000001">
    <property type="entry name" value="50S ribosomal protein L11"/>
    <property type="match status" value="1"/>
</dbReference>
<dbReference type="FunFam" id="3.30.1550.10:FF:000001">
    <property type="entry name" value="50S ribosomal protein L11"/>
    <property type="match status" value="1"/>
</dbReference>
<dbReference type="Gene3D" id="1.10.10.250">
    <property type="entry name" value="Ribosomal protein L11, C-terminal domain"/>
    <property type="match status" value="1"/>
</dbReference>
<dbReference type="Gene3D" id="3.30.1550.10">
    <property type="entry name" value="Ribosomal protein L11/L12, N-terminal domain"/>
    <property type="match status" value="1"/>
</dbReference>
<dbReference type="HAMAP" id="MF_00736">
    <property type="entry name" value="Ribosomal_uL11"/>
    <property type="match status" value="1"/>
</dbReference>
<dbReference type="InterPro" id="IPR000911">
    <property type="entry name" value="Ribosomal_uL11"/>
</dbReference>
<dbReference type="InterPro" id="IPR006519">
    <property type="entry name" value="Ribosomal_uL11_bac-typ"/>
</dbReference>
<dbReference type="InterPro" id="IPR020783">
    <property type="entry name" value="Ribosomal_uL11_C"/>
</dbReference>
<dbReference type="InterPro" id="IPR036769">
    <property type="entry name" value="Ribosomal_uL11_C_sf"/>
</dbReference>
<dbReference type="InterPro" id="IPR020784">
    <property type="entry name" value="Ribosomal_uL11_N"/>
</dbReference>
<dbReference type="InterPro" id="IPR036796">
    <property type="entry name" value="Ribosomal_uL11_N_sf"/>
</dbReference>
<dbReference type="NCBIfam" id="TIGR01632">
    <property type="entry name" value="L11_bact"/>
    <property type="match status" value="1"/>
</dbReference>
<dbReference type="PANTHER" id="PTHR11661">
    <property type="entry name" value="60S RIBOSOMAL PROTEIN L12"/>
    <property type="match status" value="1"/>
</dbReference>
<dbReference type="PANTHER" id="PTHR11661:SF1">
    <property type="entry name" value="LARGE RIBOSOMAL SUBUNIT PROTEIN UL11M"/>
    <property type="match status" value="1"/>
</dbReference>
<dbReference type="Pfam" id="PF00298">
    <property type="entry name" value="Ribosomal_L11"/>
    <property type="match status" value="1"/>
</dbReference>
<dbReference type="Pfam" id="PF03946">
    <property type="entry name" value="Ribosomal_L11_N"/>
    <property type="match status" value="1"/>
</dbReference>
<dbReference type="SMART" id="SM00649">
    <property type="entry name" value="RL11"/>
    <property type="match status" value="1"/>
</dbReference>
<dbReference type="SUPFAM" id="SSF54747">
    <property type="entry name" value="Ribosomal L11/L12e N-terminal domain"/>
    <property type="match status" value="1"/>
</dbReference>
<dbReference type="SUPFAM" id="SSF46906">
    <property type="entry name" value="Ribosomal protein L11, C-terminal domain"/>
    <property type="match status" value="1"/>
</dbReference>
<accession>A7IKP6</accession>
<keyword id="KW-0488">Methylation</keyword>
<keyword id="KW-1185">Reference proteome</keyword>
<keyword id="KW-0687">Ribonucleoprotein</keyword>
<keyword id="KW-0689">Ribosomal protein</keyword>
<keyword id="KW-0694">RNA-binding</keyword>
<keyword id="KW-0699">rRNA-binding</keyword>
<organism>
    <name type="scientific">Xanthobacter autotrophicus (strain ATCC BAA-1158 / Py2)</name>
    <dbReference type="NCBI Taxonomy" id="78245"/>
    <lineage>
        <taxon>Bacteria</taxon>
        <taxon>Pseudomonadati</taxon>
        <taxon>Pseudomonadota</taxon>
        <taxon>Alphaproteobacteria</taxon>
        <taxon>Hyphomicrobiales</taxon>
        <taxon>Xanthobacteraceae</taxon>
        <taxon>Xanthobacter</taxon>
    </lineage>
</organism>
<name>RL11_XANP2</name>
<reference key="1">
    <citation type="submission" date="2007-07" db="EMBL/GenBank/DDBJ databases">
        <title>Complete sequence of chromosome of Xanthobacter autotrophicus Py2.</title>
        <authorList>
            <consortium name="US DOE Joint Genome Institute"/>
            <person name="Copeland A."/>
            <person name="Lucas S."/>
            <person name="Lapidus A."/>
            <person name="Barry K."/>
            <person name="Glavina del Rio T."/>
            <person name="Hammon N."/>
            <person name="Israni S."/>
            <person name="Dalin E."/>
            <person name="Tice H."/>
            <person name="Pitluck S."/>
            <person name="Sims D."/>
            <person name="Brettin T."/>
            <person name="Bruce D."/>
            <person name="Detter J.C."/>
            <person name="Han C."/>
            <person name="Tapia R."/>
            <person name="Brainard J."/>
            <person name="Schmutz J."/>
            <person name="Larimer F."/>
            <person name="Land M."/>
            <person name="Hauser L."/>
            <person name="Kyrpides N."/>
            <person name="Kim E."/>
            <person name="Ensigns S.A."/>
            <person name="Richardson P."/>
        </authorList>
    </citation>
    <scope>NUCLEOTIDE SEQUENCE [LARGE SCALE GENOMIC DNA]</scope>
    <source>
        <strain>ATCC BAA-1158 / Py2</strain>
    </source>
</reference>